<feature type="chain" id="PRO_0000272299" description="Leucine-rich repeat-containing protein 28">
    <location>
        <begin position="1"/>
        <end position="367"/>
    </location>
</feature>
<feature type="repeat" description="LRR 1">
    <location>
        <begin position="16"/>
        <end position="36"/>
    </location>
</feature>
<feature type="repeat" description="LRR 2">
    <location>
        <begin position="42"/>
        <end position="63"/>
    </location>
</feature>
<feature type="repeat" description="LRR 3">
    <location>
        <begin position="66"/>
        <end position="87"/>
    </location>
</feature>
<feature type="repeat" description="LRR 4">
    <location>
        <begin position="89"/>
        <end position="111"/>
    </location>
</feature>
<feature type="repeat" description="LRR 5">
    <location>
        <begin position="112"/>
        <end position="133"/>
    </location>
</feature>
<feature type="repeat" description="LRR 6">
    <location>
        <begin position="135"/>
        <end position="156"/>
    </location>
</feature>
<feature type="repeat" description="LRR 7">
    <location>
        <begin position="158"/>
        <end position="180"/>
    </location>
</feature>
<feature type="repeat" description="LRR 8">
    <location>
        <begin position="181"/>
        <end position="202"/>
    </location>
</feature>
<feature type="repeat" description="LRR 9">
    <location>
        <begin position="204"/>
        <end position="226"/>
    </location>
</feature>
<feature type="sequence conflict" description="In Ref. 2; AAH86694." evidence="1" ref="2">
    <original>HHFPLELLKDEGLQH</original>
    <variation>QPLILQQ</variation>
    <location>
        <begin position="28"/>
        <end position="42"/>
    </location>
</feature>
<feature type="sequence conflict" description="In Ref. 1; BAC36722." evidence="1" ref="1">
    <original>CPE</original>
    <variation>WPK</variation>
    <location>
        <begin position="104"/>
        <end position="106"/>
    </location>
</feature>
<sequence>MASEICKTISVARLEKHKNLFLNYRNLHHFPLELLKDEGLQHLERLYMKRNSLTTLPENLAQKLPNLVELYLHSNNIVVVPEAIGSLVKLQCLDLSDNALEIVCPEIGGLRALRHLRLANNQLQFLPPEVGDLKELQTLDISSNRLLALPERLHLCLSLQYLTVDRNRLCCVPRHLCQLPSLNELSMAGNHLASLPIDLGRSRELQYVYVDNNIQLKGLPSYLYNKVIGCNGCGIPIQLSEVRLLTFSSGQLTVFLPAEVKTIGTEKDHVLPLQELTMRSLYRTYHGLWKDLNFLSPISLPRSLLELLHCPLGHCHLCSEPMFTFVYPKIFPLRETPMAGLHQRRTSIGFVAYCCSTQCLRTFNLLC</sequence>
<proteinExistence type="evidence at transcript level"/>
<name>LRC28_MOUSE</name>
<evidence type="ECO:0000305" key="1"/>
<protein>
    <recommendedName>
        <fullName>Leucine-rich repeat-containing protein 28</fullName>
    </recommendedName>
</protein>
<accession>Q3TX51</accession>
<accession>Q0VGR7</accession>
<accession>Q8BK43</accession>
<keyword id="KW-0433">Leucine-rich repeat</keyword>
<keyword id="KW-1185">Reference proteome</keyword>
<keyword id="KW-0677">Repeat</keyword>
<gene>
    <name type="primary">Lrrc28</name>
</gene>
<reference key="1">
    <citation type="journal article" date="2005" name="Science">
        <title>The transcriptional landscape of the mammalian genome.</title>
        <authorList>
            <person name="Carninci P."/>
            <person name="Kasukawa T."/>
            <person name="Katayama S."/>
            <person name="Gough J."/>
            <person name="Frith M.C."/>
            <person name="Maeda N."/>
            <person name="Oyama R."/>
            <person name="Ravasi T."/>
            <person name="Lenhard B."/>
            <person name="Wells C."/>
            <person name="Kodzius R."/>
            <person name="Shimokawa K."/>
            <person name="Bajic V.B."/>
            <person name="Brenner S.E."/>
            <person name="Batalov S."/>
            <person name="Forrest A.R."/>
            <person name="Zavolan M."/>
            <person name="Davis M.J."/>
            <person name="Wilming L.G."/>
            <person name="Aidinis V."/>
            <person name="Allen J.E."/>
            <person name="Ambesi-Impiombato A."/>
            <person name="Apweiler R."/>
            <person name="Aturaliya R.N."/>
            <person name="Bailey T.L."/>
            <person name="Bansal M."/>
            <person name="Baxter L."/>
            <person name="Beisel K.W."/>
            <person name="Bersano T."/>
            <person name="Bono H."/>
            <person name="Chalk A.M."/>
            <person name="Chiu K.P."/>
            <person name="Choudhary V."/>
            <person name="Christoffels A."/>
            <person name="Clutterbuck D.R."/>
            <person name="Crowe M.L."/>
            <person name="Dalla E."/>
            <person name="Dalrymple B.P."/>
            <person name="de Bono B."/>
            <person name="Della Gatta G."/>
            <person name="di Bernardo D."/>
            <person name="Down T."/>
            <person name="Engstrom P."/>
            <person name="Fagiolini M."/>
            <person name="Faulkner G."/>
            <person name="Fletcher C.F."/>
            <person name="Fukushima T."/>
            <person name="Furuno M."/>
            <person name="Futaki S."/>
            <person name="Gariboldi M."/>
            <person name="Georgii-Hemming P."/>
            <person name="Gingeras T.R."/>
            <person name="Gojobori T."/>
            <person name="Green R.E."/>
            <person name="Gustincich S."/>
            <person name="Harbers M."/>
            <person name="Hayashi Y."/>
            <person name="Hensch T.K."/>
            <person name="Hirokawa N."/>
            <person name="Hill D."/>
            <person name="Huminiecki L."/>
            <person name="Iacono M."/>
            <person name="Ikeo K."/>
            <person name="Iwama A."/>
            <person name="Ishikawa T."/>
            <person name="Jakt M."/>
            <person name="Kanapin A."/>
            <person name="Katoh M."/>
            <person name="Kawasawa Y."/>
            <person name="Kelso J."/>
            <person name="Kitamura H."/>
            <person name="Kitano H."/>
            <person name="Kollias G."/>
            <person name="Krishnan S.P."/>
            <person name="Kruger A."/>
            <person name="Kummerfeld S.K."/>
            <person name="Kurochkin I.V."/>
            <person name="Lareau L.F."/>
            <person name="Lazarevic D."/>
            <person name="Lipovich L."/>
            <person name="Liu J."/>
            <person name="Liuni S."/>
            <person name="McWilliam S."/>
            <person name="Madan Babu M."/>
            <person name="Madera M."/>
            <person name="Marchionni L."/>
            <person name="Matsuda H."/>
            <person name="Matsuzawa S."/>
            <person name="Miki H."/>
            <person name="Mignone F."/>
            <person name="Miyake S."/>
            <person name="Morris K."/>
            <person name="Mottagui-Tabar S."/>
            <person name="Mulder N."/>
            <person name="Nakano N."/>
            <person name="Nakauchi H."/>
            <person name="Ng P."/>
            <person name="Nilsson R."/>
            <person name="Nishiguchi S."/>
            <person name="Nishikawa S."/>
            <person name="Nori F."/>
            <person name="Ohara O."/>
            <person name="Okazaki Y."/>
            <person name="Orlando V."/>
            <person name="Pang K.C."/>
            <person name="Pavan W.J."/>
            <person name="Pavesi G."/>
            <person name="Pesole G."/>
            <person name="Petrovsky N."/>
            <person name="Piazza S."/>
            <person name="Reed J."/>
            <person name="Reid J.F."/>
            <person name="Ring B.Z."/>
            <person name="Ringwald M."/>
            <person name="Rost B."/>
            <person name="Ruan Y."/>
            <person name="Salzberg S.L."/>
            <person name="Sandelin A."/>
            <person name="Schneider C."/>
            <person name="Schoenbach C."/>
            <person name="Sekiguchi K."/>
            <person name="Semple C.A."/>
            <person name="Seno S."/>
            <person name="Sessa L."/>
            <person name="Sheng Y."/>
            <person name="Shibata Y."/>
            <person name="Shimada H."/>
            <person name="Shimada K."/>
            <person name="Silva D."/>
            <person name="Sinclair B."/>
            <person name="Sperling S."/>
            <person name="Stupka E."/>
            <person name="Sugiura K."/>
            <person name="Sultana R."/>
            <person name="Takenaka Y."/>
            <person name="Taki K."/>
            <person name="Tammoja K."/>
            <person name="Tan S.L."/>
            <person name="Tang S."/>
            <person name="Taylor M.S."/>
            <person name="Tegner J."/>
            <person name="Teichmann S.A."/>
            <person name="Ueda H.R."/>
            <person name="van Nimwegen E."/>
            <person name="Verardo R."/>
            <person name="Wei C.L."/>
            <person name="Yagi K."/>
            <person name="Yamanishi H."/>
            <person name="Zabarovsky E."/>
            <person name="Zhu S."/>
            <person name="Zimmer A."/>
            <person name="Hide W."/>
            <person name="Bult C."/>
            <person name="Grimmond S.M."/>
            <person name="Teasdale R.D."/>
            <person name="Liu E.T."/>
            <person name="Brusic V."/>
            <person name="Quackenbush J."/>
            <person name="Wahlestedt C."/>
            <person name="Mattick J.S."/>
            <person name="Hume D.A."/>
            <person name="Kai C."/>
            <person name="Sasaki D."/>
            <person name="Tomaru Y."/>
            <person name="Fukuda S."/>
            <person name="Kanamori-Katayama M."/>
            <person name="Suzuki M."/>
            <person name="Aoki J."/>
            <person name="Arakawa T."/>
            <person name="Iida J."/>
            <person name="Imamura K."/>
            <person name="Itoh M."/>
            <person name="Kato T."/>
            <person name="Kawaji H."/>
            <person name="Kawagashira N."/>
            <person name="Kawashima T."/>
            <person name="Kojima M."/>
            <person name="Kondo S."/>
            <person name="Konno H."/>
            <person name="Nakano K."/>
            <person name="Ninomiya N."/>
            <person name="Nishio T."/>
            <person name="Okada M."/>
            <person name="Plessy C."/>
            <person name="Shibata K."/>
            <person name="Shiraki T."/>
            <person name="Suzuki S."/>
            <person name="Tagami M."/>
            <person name="Waki K."/>
            <person name="Watahiki A."/>
            <person name="Okamura-Oho Y."/>
            <person name="Suzuki H."/>
            <person name="Kawai J."/>
            <person name="Hayashizaki Y."/>
        </authorList>
    </citation>
    <scope>NUCLEOTIDE SEQUENCE [LARGE SCALE MRNA]</scope>
    <source>
        <strain>C57BL/6J</strain>
    </source>
</reference>
<reference key="2">
    <citation type="journal article" date="2004" name="Genome Res.">
        <title>The status, quality, and expansion of the NIH full-length cDNA project: the Mammalian Gene Collection (MGC).</title>
        <authorList>
            <consortium name="The MGC Project Team"/>
        </authorList>
    </citation>
    <scope>NUCLEOTIDE SEQUENCE [LARGE SCALE MRNA]</scope>
    <source>
        <strain>C57BL/6J</strain>
        <tissue>Eye</tissue>
    </source>
</reference>
<dbReference type="EMBL" id="AK077270">
    <property type="protein sequence ID" value="BAC36722.1"/>
    <property type="molecule type" value="mRNA"/>
</dbReference>
<dbReference type="EMBL" id="AK159417">
    <property type="protein sequence ID" value="BAE35065.1"/>
    <property type="molecule type" value="mRNA"/>
</dbReference>
<dbReference type="EMBL" id="BC086694">
    <property type="protein sequence ID" value="AAH86694.1"/>
    <property type="molecule type" value="mRNA"/>
</dbReference>
<dbReference type="CCDS" id="CCDS21351.1"/>
<dbReference type="RefSeq" id="NP_780333.3">
    <property type="nucleotide sequence ID" value="NM_175124.5"/>
</dbReference>
<dbReference type="SMR" id="Q3TX51"/>
<dbReference type="FunCoup" id="Q3TX51">
    <property type="interactions" value="42"/>
</dbReference>
<dbReference type="STRING" id="10090.ENSMUSP00000052177"/>
<dbReference type="PhosphoSitePlus" id="Q3TX51"/>
<dbReference type="SwissPalm" id="Q3TX51"/>
<dbReference type="PaxDb" id="10090-ENSMUSP00000052177"/>
<dbReference type="ProteomicsDB" id="287266"/>
<dbReference type="Antibodypedia" id="29175">
    <property type="antibodies" value="108 antibodies from 17 providers"/>
</dbReference>
<dbReference type="DNASU" id="67867"/>
<dbReference type="Ensembl" id="ENSMUST00000053950.10">
    <property type="protein sequence ID" value="ENSMUSP00000052177.3"/>
    <property type="gene ID" value="ENSMUSG00000030556.14"/>
</dbReference>
<dbReference type="GeneID" id="67867"/>
<dbReference type="KEGG" id="mmu:67867"/>
<dbReference type="UCSC" id="uc009hin.2">
    <property type="organism name" value="mouse"/>
</dbReference>
<dbReference type="AGR" id="MGI:1915689"/>
<dbReference type="CTD" id="123355"/>
<dbReference type="MGI" id="MGI:1915689">
    <property type="gene designation" value="Lrrc28"/>
</dbReference>
<dbReference type="VEuPathDB" id="HostDB:ENSMUSG00000030556"/>
<dbReference type="eggNOG" id="KOG0619">
    <property type="taxonomic scope" value="Eukaryota"/>
</dbReference>
<dbReference type="GeneTree" id="ENSGT00940000157771"/>
<dbReference type="HOGENOM" id="CLU_064321_1_0_1"/>
<dbReference type="InParanoid" id="Q3TX51"/>
<dbReference type="OMA" id="LYHTCHR"/>
<dbReference type="OrthoDB" id="2021138at2759"/>
<dbReference type="PhylomeDB" id="Q3TX51"/>
<dbReference type="TreeFam" id="TF332379"/>
<dbReference type="BioGRID-ORCS" id="67867">
    <property type="hits" value="1 hit in 76 CRISPR screens"/>
</dbReference>
<dbReference type="ChiTaRS" id="Lrrc28">
    <property type="organism name" value="mouse"/>
</dbReference>
<dbReference type="PRO" id="PR:Q3TX51"/>
<dbReference type="Proteomes" id="UP000000589">
    <property type="component" value="Chromosome 7"/>
</dbReference>
<dbReference type="RNAct" id="Q3TX51">
    <property type="molecule type" value="protein"/>
</dbReference>
<dbReference type="Bgee" id="ENSMUSG00000030556">
    <property type="expression patterns" value="Expressed in animal zygote and 228 other cell types or tissues"/>
</dbReference>
<dbReference type="ExpressionAtlas" id="Q3TX51">
    <property type="expression patterns" value="baseline and differential"/>
</dbReference>
<dbReference type="Gene3D" id="3.80.10.10">
    <property type="entry name" value="Ribonuclease Inhibitor"/>
    <property type="match status" value="1"/>
</dbReference>
<dbReference type="InterPro" id="IPR001611">
    <property type="entry name" value="Leu-rich_rpt"/>
</dbReference>
<dbReference type="InterPro" id="IPR003591">
    <property type="entry name" value="Leu-rich_rpt_typical-subtyp"/>
</dbReference>
<dbReference type="InterPro" id="IPR032675">
    <property type="entry name" value="LRR_dom_sf"/>
</dbReference>
<dbReference type="InterPro" id="IPR050216">
    <property type="entry name" value="LRR_domain-containing"/>
</dbReference>
<dbReference type="InterPro" id="IPR055414">
    <property type="entry name" value="LRR_R13L4/SHOC2-like"/>
</dbReference>
<dbReference type="PANTHER" id="PTHR48051">
    <property type="match status" value="1"/>
</dbReference>
<dbReference type="PANTHER" id="PTHR48051:SF12">
    <property type="entry name" value="LEUCINE-RICH REPEAT-CONTAINING PROTEIN 28"/>
    <property type="match status" value="1"/>
</dbReference>
<dbReference type="Pfam" id="PF23598">
    <property type="entry name" value="LRR_14"/>
    <property type="match status" value="1"/>
</dbReference>
<dbReference type="Pfam" id="PF13855">
    <property type="entry name" value="LRR_8"/>
    <property type="match status" value="1"/>
</dbReference>
<dbReference type="SMART" id="SM00364">
    <property type="entry name" value="LRR_BAC"/>
    <property type="match status" value="6"/>
</dbReference>
<dbReference type="SMART" id="SM00369">
    <property type="entry name" value="LRR_TYP"/>
    <property type="match status" value="6"/>
</dbReference>
<dbReference type="SUPFAM" id="SSF52058">
    <property type="entry name" value="L domain-like"/>
    <property type="match status" value="1"/>
</dbReference>
<dbReference type="PROSITE" id="PS51450">
    <property type="entry name" value="LRR"/>
    <property type="match status" value="7"/>
</dbReference>
<organism>
    <name type="scientific">Mus musculus</name>
    <name type="common">Mouse</name>
    <dbReference type="NCBI Taxonomy" id="10090"/>
    <lineage>
        <taxon>Eukaryota</taxon>
        <taxon>Metazoa</taxon>
        <taxon>Chordata</taxon>
        <taxon>Craniata</taxon>
        <taxon>Vertebrata</taxon>
        <taxon>Euteleostomi</taxon>
        <taxon>Mammalia</taxon>
        <taxon>Eutheria</taxon>
        <taxon>Euarchontoglires</taxon>
        <taxon>Glires</taxon>
        <taxon>Rodentia</taxon>
        <taxon>Myomorpha</taxon>
        <taxon>Muroidea</taxon>
        <taxon>Muridae</taxon>
        <taxon>Murinae</taxon>
        <taxon>Mus</taxon>
        <taxon>Mus</taxon>
    </lineage>
</organism>